<keyword id="KW-0028">Amino-acid biosynthesis</keyword>
<keyword id="KW-0067">ATP-binding</keyword>
<keyword id="KW-0963">Cytoplasm</keyword>
<keyword id="KW-0418">Kinase</keyword>
<keyword id="KW-0547">Nucleotide-binding</keyword>
<keyword id="KW-0641">Proline biosynthesis</keyword>
<keyword id="KW-0808">Transferase</keyword>
<reference key="1">
    <citation type="journal article" date="2009" name="PLoS Genet.">
        <title>Organised genome dynamics in the Escherichia coli species results in highly diverse adaptive paths.</title>
        <authorList>
            <person name="Touchon M."/>
            <person name="Hoede C."/>
            <person name="Tenaillon O."/>
            <person name="Barbe V."/>
            <person name="Baeriswyl S."/>
            <person name="Bidet P."/>
            <person name="Bingen E."/>
            <person name="Bonacorsi S."/>
            <person name="Bouchier C."/>
            <person name="Bouvet O."/>
            <person name="Calteau A."/>
            <person name="Chiapello H."/>
            <person name="Clermont O."/>
            <person name="Cruveiller S."/>
            <person name="Danchin A."/>
            <person name="Diard M."/>
            <person name="Dossat C."/>
            <person name="Karoui M.E."/>
            <person name="Frapy E."/>
            <person name="Garry L."/>
            <person name="Ghigo J.M."/>
            <person name="Gilles A.M."/>
            <person name="Johnson J."/>
            <person name="Le Bouguenec C."/>
            <person name="Lescat M."/>
            <person name="Mangenot S."/>
            <person name="Martinez-Jehanne V."/>
            <person name="Matic I."/>
            <person name="Nassif X."/>
            <person name="Oztas S."/>
            <person name="Petit M.A."/>
            <person name="Pichon C."/>
            <person name="Rouy Z."/>
            <person name="Ruf C.S."/>
            <person name="Schneider D."/>
            <person name="Tourret J."/>
            <person name="Vacherie B."/>
            <person name="Vallenet D."/>
            <person name="Medigue C."/>
            <person name="Rocha E.P.C."/>
            <person name="Denamur E."/>
        </authorList>
    </citation>
    <scope>NUCLEOTIDE SEQUENCE [LARGE SCALE GENOMIC DNA]</scope>
    <source>
        <strain>ATCC 35469 / DSM 13698 / BCRC 15582 / CCUG 18766 / IAM 14443 / JCM 21226 / LMG 7866 / NBRC 102419 / NCTC 12128 / CDC 0568-73</strain>
    </source>
</reference>
<comment type="function">
    <text evidence="1">Catalyzes the transfer of a phosphate group to glutamate to form L-glutamate 5-phosphate.</text>
</comment>
<comment type="catalytic activity">
    <reaction evidence="1">
        <text>L-glutamate + ATP = L-glutamyl 5-phosphate + ADP</text>
        <dbReference type="Rhea" id="RHEA:14877"/>
        <dbReference type="ChEBI" id="CHEBI:29985"/>
        <dbReference type="ChEBI" id="CHEBI:30616"/>
        <dbReference type="ChEBI" id="CHEBI:58274"/>
        <dbReference type="ChEBI" id="CHEBI:456216"/>
        <dbReference type="EC" id="2.7.2.11"/>
    </reaction>
</comment>
<comment type="pathway">
    <text evidence="1">Amino-acid biosynthesis; L-proline biosynthesis; L-glutamate 5-semialdehyde from L-glutamate: step 1/2.</text>
</comment>
<comment type="subcellular location">
    <subcellularLocation>
        <location evidence="1">Cytoplasm</location>
    </subcellularLocation>
</comment>
<comment type="similarity">
    <text evidence="1">Belongs to the glutamate 5-kinase family.</text>
</comment>
<evidence type="ECO:0000255" key="1">
    <source>
        <dbReference type="HAMAP-Rule" id="MF_00456"/>
    </source>
</evidence>
<proteinExistence type="inferred from homology"/>
<accession>B7LNF8</accession>
<protein>
    <recommendedName>
        <fullName evidence="1">Glutamate 5-kinase</fullName>
        <ecNumber evidence="1">2.7.2.11</ecNumber>
    </recommendedName>
    <alternativeName>
        <fullName evidence="1">Gamma-glutamyl kinase</fullName>
        <shortName evidence="1">GK</shortName>
    </alternativeName>
</protein>
<name>PROB_ESCF3</name>
<gene>
    <name evidence="1" type="primary">proB</name>
    <name type="ordered locus">EFER_2736</name>
</gene>
<organism>
    <name type="scientific">Escherichia fergusonii (strain ATCC 35469 / DSM 13698 / CCUG 18766 / IAM 14443 / JCM 21226 / LMG 7866 / NBRC 102419 / NCTC 12128 / CDC 0568-73)</name>
    <dbReference type="NCBI Taxonomy" id="585054"/>
    <lineage>
        <taxon>Bacteria</taxon>
        <taxon>Pseudomonadati</taxon>
        <taxon>Pseudomonadota</taxon>
        <taxon>Gammaproteobacteria</taxon>
        <taxon>Enterobacterales</taxon>
        <taxon>Enterobacteriaceae</taxon>
        <taxon>Escherichia</taxon>
    </lineage>
</organism>
<sequence length="367" mass="39046">MSDSQTLVVKLGTSVLTGGSRRLNRAHIVELVRQCAQLHAAGHRIVIVTSGAIAAGREHLGYPELPATIASKQLLAAVGQSRLIQLWEQLFSIYGIHVGQMLLTRADMEDRERFLNARDTLRALLDNNIVPVINENDAVATAEIKVGDNDNLSALAAILAGADKLLLLTDQKGLYTADPRSNPQAELIKDVYGIDDALRAIAGDSVSGLGTGGMSTKLQAADVACRAGIDTIIAAGSKPGVIGDVMEGISVGTLFHAQATPLENRKRWIFGAPPAGEITVDEGATAAILERGSSLLPKGIKSVTGNFSRGEVIRICNLEGRDIAHGVSRYNSDALRRIAGHHSQEIDAILGYEYGSVAVHRDDMITR</sequence>
<dbReference type="EC" id="2.7.2.11" evidence="1"/>
<dbReference type="EMBL" id="CU928158">
    <property type="protein sequence ID" value="CAQ90231.1"/>
    <property type="molecule type" value="Genomic_DNA"/>
</dbReference>
<dbReference type="RefSeq" id="WP_001285289.1">
    <property type="nucleotide sequence ID" value="NC_011740.1"/>
</dbReference>
<dbReference type="SMR" id="B7LNF8"/>
<dbReference type="GeneID" id="75056227"/>
<dbReference type="KEGG" id="efe:EFER_2736"/>
<dbReference type="HOGENOM" id="CLU_025400_2_0_6"/>
<dbReference type="OrthoDB" id="9804434at2"/>
<dbReference type="UniPathway" id="UPA00098">
    <property type="reaction ID" value="UER00359"/>
</dbReference>
<dbReference type="Proteomes" id="UP000000745">
    <property type="component" value="Chromosome"/>
</dbReference>
<dbReference type="GO" id="GO:0005829">
    <property type="term" value="C:cytosol"/>
    <property type="evidence" value="ECO:0007669"/>
    <property type="project" value="TreeGrafter"/>
</dbReference>
<dbReference type="GO" id="GO:0005524">
    <property type="term" value="F:ATP binding"/>
    <property type="evidence" value="ECO:0007669"/>
    <property type="project" value="UniProtKB-KW"/>
</dbReference>
<dbReference type="GO" id="GO:0004349">
    <property type="term" value="F:glutamate 5-kinase activity"/>
    <property type="evidence" value="ECO:0007669"/>
    <property type="project" value="UniProtKB-UniRule"/>
</dbReference>
<dbReference type="GO" id="GO:0003723">
    <property type="term" value="F:RNA binding"/>
    <property type="evidence" value="ECO:0007669"/>
    <property type="project" value="InterPro"/>
</dbReference>
<dbReference type="GO" id="GO:0055129">
    <property type="term" value="P:L-proline biosynthetic process"/>
    <property type="evidence" value="ECO:0007669"/>
    <property type="project" value="UniProtKB-UniRule"/>
</dbReference>
<dbReference type="CDD" id="cd04242">
    <property type="entry name" value="AAK_G5K_ProB"/>
    <property type="match status" value="1"/>
</dbReference>
<dbReference type="CDD" id="cd21157">
    <property type="entry name" value="PUA_G5K"/>
    <property type="match status" value="1"/>
</dbReference>
<dbReference type="FunFam" id="2.30.130.10:FF:000003">
    <property type="entry name" value="Glutamate 5-kinase"/>
    <property type="match status" value="1"/>
</dbReference>
<dbReference type="FunFam" id="3.40.1160.10:FF:000006">
    <property type="entry name" value="Glutamate 5-kinase"/>
    <property type="match status" value="1"/>
</dbReference>
<dbReference type="Gene3D" id="3.40.1160.10">
    <property type="entry name" value="Acetylglutamate kinase-like"/>
    <property type="match status" value="2"/>
</dbReference>
<dbReference type="Gene3D" id="2.30.130.10">
    <property type="entry name" value="PUA domain"/>
    <property type="match status" value="1"/>
</dbReference>
<dbReference type="HAMAP" id="MF_00456">
    <property type="entry name" value="ProB"/>
    <property type="match status" value="1"/>
</dbReference>
<dbReference type="InterPro" id="IPR036393">
    <property type="entry name" value="AceGlu_kinase-like_sf"/>
</dbReference>
<dbReference type="InterPro" id="IPR001048">
    <property type="entry name" value="Asp/Glu/Uridylate_kinase"/>
</dbReference>
<dbReference type="InterPro" id="IPR041739">
    <property type="entry name" value="G5K_ProB"/>
</dbReference>
<dbReference type="InterPro" id="IPR001057">
    <property type="entry name" value="Glu/AcGlu_kinase"/>
</dbReference>
<dbReference type="InterPro" id="IPR011529">
    <property type="entry name" value="Glu_5kinase"/>
</dbReference>
<dbReference type="InterPro" id="IPR005715">
    <property type="entry name" value="Glu_5kinase/COase_Synthase"/>
</dbReference>
<dbReference type="InterPro" id="IPR019797">
    <property type="entry name" value="Glutamate_5-kinase_CS"/>
</dbReference>
<dbReference type="InterPro" id="IPR002478">
    <property type="entry name" value="PUA"/>
</dbReference>
<dbReference type="InterPro" id="IPR015947">
    <property type="entry name" value="PUA-like_sf"/>
</dbReference>
<dbReference type="InterPro" id="IPR036974">
    <property type="entry name" value="PUA_sf"/>
</dbReference>
<dbReference type="NCBIfam" id="TIGR01027">
    <property type="entry name" value="proB"/>
    <property type="match status" value="1"/>
</dbReference>
<dbReference type="PANTHER" id="PTHR43654">
    <property type="entry name" value="GLUTAMATE 5-KINASE"/>
    <property type="match status" value="1"/>
</dbReference>
<dbReference type="PANTHER" id="PTHR43654:SF1">
    <property type="entry name" value="ISOPENTENYL PHOSPHATE KINASE"/>
    <property type="match status" value="1"/>
</dbReference>
<dbReference type="Pfam" id="PF00696">
    <property type="entry name" value="AA_kinase"/>
    <property type="match status" value="1"/>
</dbReference>
<dbReference type="Pfam" id="PF01472">
    <property type="entry name" value="PUA"/>
    <property type="match status" value="1"/>
</dbReference>
<dbReference type="PIRSF" id="PIRSF000729">
    <property type="entry name" value="GK"/>
    <property type="match status" value="1"/>
</dbReference>
<dbReference type="PRINTS" id="PR00474">
    <property type="entry name" value="GLU5KINASE"/>
</dbReference>
<dbReference type="SMART" id="SM00359">
    <property type="entry name" value="PUA"/>
    <property type="match status" value="1"/>
</dbReference>
<dbReference type="SUPFAM" id="SSF53633">
    <property type="entry name" value="Carbamate kinase-like"/>
    <property type="match status" value="1"/>
</dbReference>
<dbReference type="SUPFAM" id="SSF88697">
    <property type="entry name" value="PUA domain-like"/>
    <property type="match status" value="1"/>
</dbReference>
<dbReference type="PROSITE" id="PS00902">
    <property type="entry name" value="GLUTAMATE_5_KINASE"/>
    <property type="match status" value="1"/>
</dbReference>
<dbReference type="PROSITE" id="PS50890">
    <property type="entry name" value="PUA"/>
    <property type="match status" value="1"/>
</dbReference>
<feature type="chain" id="PRO_1000125237" description="Glutamate 5-kinase">
    <location>
        <begin position="1"/>
        <end position="367"/>
    </location>
</feature>
<feature type="domain" description="PUA" evidence="1">
    <location>
        <begin position="275"/>
        <end position="353"/>
    </location>
</feature>
<feature type="binding site" evidence="1">
    <location>
        <position position="10"/>
    </location>
    <ligand>
        <name>ATP</name>
        <dbReference type="ChEBI" id="CHEBI:30616"/>
    </ligand>
</feature>
<feature type="binding site" evidence="1">
    <location>
        <position position="50"/>
    </location>
    <ligand>
        <name>substrate</name>
    </ligand>
</feature>
<feature type="binding site" evidence="1">
    <location>
        <position position="137"/>
    </location>
    <ligand>
        <name>substrate</name>
    </ligand>
</feature>
<feature type="binding site" evidence="1">
    <location>
        <position position="149"/>
    </location>
    <ligand>
        <name>substrate</name>
    </ligand>
</feature>
<feature type="binding site" evidence="1">
    <location>
        <begin position="169"/>
        <end position="170"/>
    </location>
    <ligand>
        <name>ATP</name>
        <dbReference type="ChEBI" id="CHEBI:30616"/>
    </ligand>
</feature>
<feature type="binding site" evidence="1">
    <location>
        <begin position="211"/>
        <end position="217"/>
    </location>
    <ligand>
        <name>ATP</name>
        <dbReference type="ChEBI" id="CHEBI:30616"/>
    </ligand>
</feature>